<organism>
    <name type="scientific">Yersinia pseudotuberculosis serotype O:1b (strain IP 31758)</name>
    <dbReference type="NCBI Taxonomy" id="349747"/>
    <lineage>
        <taxon>Bacteria</taxon>
        <taxon>Pseudomonadati</taxon>
        <taxon>Pseudomonadota</taxon>
        <taxon>Gammaproteobacteria</taxon>
        <taxon>Enterobacterales</taxon>
        <taxon>Yersiniaceae</taxon>
        <taxon>Yersinia</taxon>
    </lineage>
</organism>
<sequence length="192" mass="20909">MINKTLLGLSLGALMFTAGSAVAADYKIDKEGQHAFIEFRIKHLGYSWLYGSFNDFDGSFTFDDKNPAADKVNVVINTNSVDTNHAERDKHLRGKSFLNVAKFPQATFESTEVKKNGDGYSVIGNLTLNGVTKPVTLESKLTGQGNDPWGGYRAGFEANGNIKLKDFNITTDLGPASQEVELILSVEGVQVK</sequence>
<name>Y1821_YERP3</name>
<comment type="subcellular location">
    <subcellularLocation>
        <location evidence="1">Periplasm</location>
    </subcellularLocation>
</comment>
<comment type="similarity">
    <text evidence="1">Belongs to the UPF0312 family. Type 1 subfamily.</text>
</comment>
<proteinExistence type="inferred from homology"/>
<keyword id="KW-0574">Periplasm</keyword>
<keyword id="KW-0732">Signal</keyword>
<accession>A7FHR8</accession>
<feature type="signal peptide" evidence="1">
    <location>
        <begin position="1"/>
        <end position="23"/>
    </location>
</feature>
<feature type="chain" id="PRO_1000062243" description="UPF0312 protein YpsIP31758_1821">
    <location>
        <begin position="24"/>
        <end position="192"/>
    </location>
</feature>
<reference key="1">
    <citation type="journal article" date="2007" name="PLoS Genet.">
        <title>The complete genome sequence of Yersinia pseudotuberculosis IP31758, the causative agent of Far East scarlet-like fever.</title>
        <authorList>
            <person name="Eppinger M."/>
            <person name="Rosovitz M.J."/>
            <person name="Fricke W.F."/>
            <person name="Rasko D.A."/>
            <person name="Kokorina G."/>
            <person name="Fayolle C."/>
            <person name="Lindler L.E."/>
            <person name="Carniel E."/>
            <person name="Ravel J."/>
        </authorList>
    </citation>
    <scope>NUCLEOTIDE SEQUENCE [LARGE SCALE GENOMIC DNA]</scope>
    <source>
        <strain>IP 31758</strain>
    </source>
</reference>
<protein>
    <recommendedName>
        <fullName evidence="1">UPF0312 protein YpsIP31758_1821</fullName>
    </recommendedName>
</protein>
<gene>
    <name type="ordered locus">YpsIP31758_1821</name>
</gene>
<evidence type="ECO:0000255" key="1">
    <source>
        <dbReference type="HAMAP-Rule" id="MF_00780"/>
    </source>
</evidence>
<dbReference type="EMBL" id="CP000720">
    <property type="protein sequence ID" value="ABS46254.1"/>
    <property type="molecule type" value="Genomic_DNA"/>
</dbReference>
<dbReference type="RefSeq" id="WP_002211011.1">
    <property type="nucleotide sequence ID" value="NC_009708.1"/>
</dbReference>
<dbReference type="SMR" id="A7FHR8"/>
<dbReference type="KEGG" id="ypi:YpsIP31758_1821"/>
<dbReference type="HOGENOM" id="CLU_071003_1_2_6"/>
<dbReference type="Proteomes" id="UP000002412">
    <property type="component" value="Chromosome"/>
</dbReference>
<dbReference type="GO" id="GO:0042597">
    <property type="term" value="C:periplasmic space"/>
    <property type="evidence" value="ECO:0007669"/>
    <property type="project" value="UniProtKB-SubCell"/>
</dbReference>
<dbReference type="Gene3D" id="2.40.128.110">
    <property type="entry name" value="Lipid/polyisoprenoid-binding, YceI-like"/>
    <property type="match status" value="1"/>
</dbReference>
<dbReference type="HAMAP" id="MF_00780">
    <property type="entry name" value="UPF0312"/>
    <property type="match status" value="1"/>
</dbReference>
<dbReference type="InterPro" id="IPR007372">
    <property type="entry name" value="Lipid/polyisoprenoid-bd_YceI"/>
</dbReference>
<dbReference type="InterPro" id="IPR036761">
    <property type="entry name" value="TTHA0802/YceI-like_sf"/>
</dbReference>
<dbReference type="InterPro" id="IPR023480">
    <property type="entry name" value="UPF0312/YceI"/>
</dbReference>
<dbReference type="NCBIfam" id="NF002994">
    <property type="entry name" value="PRK03757.1"/>
    <property type="match status" value="1"/>
</dbReference>
<dbReference type="PANTHER" id="PTHR34406">
    <property type="entry name" value="PROTEIN YCEI"/>
    <property type="match status" value="1"/>
</dbReference>
<dbReference type="PANTHER" id="PTHR34406:SF1">
    <property type="entry name" value="PROTEIN YCEI"/>
    <property type="match status" value="1"/>
</dbReference>
<dbReference type="Pfam" id="PF04264">
    <property type="entry name" value="YceI"/>
    <property type="match status" value="1"/>
</dbReference>
<dbReference type="SMART" id="SM00867">
    <property type="entry name" value="YceI"/>
    <property type="match status" value="1"/>
</dbReference>
<dbReference type="SUPFAM" id="SSF101874">
    <property type="entry name" value="YceI-like"/>
    <property type="match status" value="1"/>
</dbReference>